<reference key="1">
    <citation type="journal article" date="2003" name="Nucleic Acids Res.">
        <title>The complete genome sequence and analysis of Corynebacterium diphtheriae NCTC13129.</title>
        <authorList>
            <person name="Cerdeno-Tarraga A.-M."/>
            <person name="Efstratiou A."/>
            <person name="Dover L.G."/>
            <person name="Holden M.T.G."/>
            <person name="Pallen M.J."/>
            <person name="Bentley S.D."/>
            <person name="Besra G.S."/>
            <person name="Churcher C.M."/>
            <person name="James K.D."/>
            <person name="De Zoysa A."/>
            <person name="Chillingworth T."/>
            <person name="Cronin A."/>
            <person name="Dowd L."/>
            <person name="Feltwell T."/>
            <person name="Hamlin N."/>
            <person name="Holroyd S."/>
            <person name="Jagels K."/>
            <person name="Moule S."/>
            <person name="Quail M.A."/>
            <person name="Rabbinowitsch E."/>
            <person name="Rutherford K.M."/>
            <person name="Thomson N.R."/>
            <person name="Unwin L."/>
            <person name="Whitehead S."/>
            <person name="Barrell B.G."/>
            <person name="Parkhill J."/>
        </authorList>
    </citation>
    <scope>NUCLEOTIDE SEQUENCE [LARGE SCALE GENOMIC DNA]</scope>
    <source>
        <strain>ATCC 700971 / NCTC 13129 / Biotype gravis</strain>
    </source>
</reference>
<accession>Q6NEB8</accession>
<gene>
    <name evidence="1" type="primary">panC</name>
    <name type="ordered locus">DIP2357</name>
</gene>
<keyword id="KW-0067">ATP-binding</keyword>
<keyword id="KW-0963">Cytoplasm</keyword>
<keyword id="KW-0436">Ligase</keyword>
<keyword id="KW-0547">Nucleotide-binding</keyword>
<keyword id="KW-0566">Pantothenate biosynthesis</keyword>
<keyword id="KW-1185">Reference proteome</keyword>
<protein>
    <recommendedName>
        <fullName evidence="1">Pantothenate synthetase</fullName>
        <shortName evidence="1">PS</shortName>
        <ecNumber evidence="1">6.3.2.1</ecNumber>
    </recommendedName>
    <alternativeName>
        <fullName evidence="1">Pantoate--beta-alanine ligase</fullName>
    </alternativeName>
    <alternativeName>
        <fullName evidence="1">Pantoate-activating enzyme</fullName>
    </alternativeName>
</protein>
<dbReference type="EC" id="6.3.2.1" evidence="1"/>
<dbReference type="EMBL" id="BX248361">
    <property type="protein sequence ID" value="CAE50880.1"/>
    <property type="molecule type" value="Genomic_DNA"/>
</dbReference>
<dbReference type="RefSeq" id="WP_010935789.1">
    <property type="nucleotide sequence ID" value="NC_002935.2"/>
</dbReference>
<dbReference type="SMR" id="Q6NEB8"/>
<dbReference type="STRING" id="257309.DIP2357"/>
<dbReference type="KEGG" id="cdi:DIP2357"/>
<dbReference type="HOGENOM" id="CLU_047148_0_1_11"/>
<dbReference type="UniPathway" id="UPA00028">
    <property type="reaction ID" value="UER00005"/>
</dbReference>
<dbReference type="Proteomes" id="UP000002198">
    <property type="component" value="Chromosome"/>
</dbReference>
<dbReference type="GO" id="GO:0005829">
    <property type="term" value="C:cytosol"/>
    <property type="evidence" value="ECO:0007669"/>
    <property type="project" value="TreeGrafter"/>
</dbReference>
<dbReference type="GO" id="GO:0005524">
    <property type="term" value="F:ATP binding"/>
    <property type="evidence" value="ECO:0007669"/>
    <property type="project" value="UniProtKB-KW"/>
</dbReference>
<dbReference type="GO" id="GO:0004592">
    <property type="term" value="F:pantoate-beta-alanine ligase activity"/>
    <property type="evidence" value="ECO:0007669"/>
    <property type="project" value="UniProtKB-UniRule"/>
</dbReference>
<dbReference type="GO" id="GO:0015940">
    <property type="term" value="P:pantothenate biosynthetic process"/>
    <property type="evidence" value="ECO:0007669"/>
    <property type="project" value="UniProtKB-UniRule"/>
</dbReference>
<dbReference type="CDD" id="cd00560">
    <property type="entry name" value="PanC"/>
    <property type="match status" value="1"/>
</dbReference>
<dbReference type="Gene3D" id="3.40.50.620">
    <property type="entry name" value="HUPs"/>
    <property type="match status" value="1"/>
</dbReference>
<dbReference type="Gene3D" id="3.30.1300.10">
    <property type="entry name" value="Pantoate-beta-alanine ligase, C-terminal domain"/>
    <property type="match status" value="1"/>
</dbReference>
<dbReference type="HAMAP" id="MF_00158">
    <property type="entry name" value="PanC"/>
    <property type="match status" value="1"/>
</dbReference>
<dbReference type="InterPro" id="IPR003721">
    <property type="entry name" value="Pantoate_ligase"/>
</dbReference>
<dbReference type="InterPro" id="IPR042176">
    <property type="entry name" value="Pantoate_ligase_C"/>
</dbReference>
<dbReference type="InterPro" id="IPR014729">
    <property type="entry name" value="Rossmann-like_a/b/a_fold"/>
</dbReference>
<dbReference type="NCBIfam" id="TIGR00018">
    <property type="entry name" value="panC"/>
    <property type="match status" value="1"/>
</dbReference>
<dbReference type="PANTHER" id="PTHR21299">
    <property type="entry name" value="CYTIDYLATE KINASE/PANTOATE-BETA-ALANINE LIGASE"/>
    <property type="match status" value="1"/>
</dbReference>
<dbReference type="PANTHER" id="PTHR21299:SF1">
    <property type="entry name" value="PANTOATE--BETA-ALANINE LIGASE"/>
    <property type="match status" value="1"/>
</dbReference>
<dbReference type="Pfam" id="PF02569">
    <property type="entry name" value="Pantoate_ligase"/>
    <property type="match status" value="1"/>
</dbReference>
<dbReference type="SUPFAM" id="SSF52374">
    <property type="entry name" value="Nucleotidylyl transferase"/>
    <property type="match status" value="1"/>
</dbReference>
<organism>
    <name type="scientific">Corynebacterium diphtheriae (strain ATCC 700971 / NCTC 13129 / Biotype gravis)</name>
    <dbReference type="NCBI Taxonomy" id="257309"/>
    <lineage>
        <taxon>Bacteria</taxon>
        <taxon>Bacillati</taxon>
        <taxon>Actinomycetota</taxon>
        <taxon>Actinomycetes</taxon>
        <taxon>Mycobacteriales</taxon>
        <taxon>Corynebacteriaceae</taxon>
        <taxon>Corynebacterium</taxon>
    </lineage>
</organism>
<evidence type="ECO:0000255" key="1">
    <source>
        <dbReference type="HAMAP-Rule" id="MF_00158"/>
    </source>
</evidence>
<comment type="function">
    <text evidence="1">Catalyzes the condensation of pantoate with beta-alanine in an ATP-dependent reaction via a pantoyl-adenylate intermediate.</text>
</comment>
<comment type="catalytic activity">
    <reaction evidence="1">
        <text>(R)-pantoate + beta-alanine + ATP = (R)-pantothenate + AMP + diphosphate + H(+)</text>
        <dbReference type="Rhea" id="RHEA:10912"/>
        <dbReference type="ChEBI" id="CHEBI:15378"/>
        <dbReference type="ChEBI" id="CHEBI:15980"/>
        <dbReference type="ChEBI" id="CHEBI:29032"/>
        <dbReference type="ChEBI" id="CHEBI:30616"/>
        <dbReference type="ChEBI" id="CHEBI:33019"/>
        <dbReference type="ChEBI" id="CHEBI:57966"/>
        <dbReference type="ChEBI" id="CHEBI:456215"/>
        <dbReference type="EC" id="6.3.2.1"/>
    </reaction>
</comment>
<comment type="pathway">
    <text evidence="1">Cofactor biosynthesis; (R)-pantothenate biosynthesis; (R)-pantothenate from (R)-pantoate and beta-alanine: step 1/1.</text>
</comment>
<comment type="subunit">
    <text evidence="1">Homodimer.</text>
</comment>
<comment type="subcellular location">
    <subcellularLocation>
        <location evidence="1">Cytoplasm</location>
    </subcellularLocation>
</comment>
<comment type="miscellaneous">
    <text evidence="1">The reaction proceeds by a bi uni uni bi ping pong mechanism.</text>
</comment>
<comment type="similarity">
    <text evidence="1">Belongs to the pantothenate synthetase family.</text>
</comment>
<feature type="chain" id="PRO_0000305429" description="Pantothenate synthetase">
    <location>
        <begin position="1"/>
        <end position="286"/>
    </location>
</feature>
<feature type="active site" description="Proton donor" evidence="1">
    <location>
        <position position="38"/>
    </location>
</feature>
<feature type="binding site" evidence="1">
    <location>
        <begin position="31"/>
        <end position="38"/>
    </location>
    <ligand>
        <name>ATP</name>
        <dbReference type="ChEBI" id="CHEBI:30616"/>
    </ligand>
</feature>
<feature type="binding site" evidence="1">
    <location>
        <position position="65"/>
    </location>
    <ligand>
        <name>(R)-pantoate</name>
        <dbReference type="ChEBI" id="CHEBI:15980"/>
    </ligand>
</feature>
<feature type="binding site" evidence="1">
    <location>
        <position position="65"/>
    </location>
    <ligand>
        <name>beta-alanine</name>
        <dbReference type="ChEBI" id="CHEBI:57966"/>
    </ligand>
</feature>
<feature type="binding site" evidence="1">
    <location>
        <begin position="153"/>
        <end position="156"/>
    </location>
    <ligand>
        <name>ATP</name>
        <dbReference type="ChEBI" id="CHEBI:30616"/>
    </ligand>
</feature>
<feature type="binding site" evidence="1">
    <location>
        <position position="159"/>
    </location>
    <ligand>
        <name>(R)-pantoate</name>
        <dbReference type="ChEBI" id="CHEBI:15980"/>
    </ligand>
</feature>
<feature type="binding site" evidence="1">
    <location>
        <begin position="190"/>
        <end position="193"/>
    </location>
    <ligand>
        <name>ATP</name>
        <dbReference type="ChEBI" id="CHEBI:30616"/>
    </ligand>
</feature>
<sequence length="286" mass="31128">MTSITHTISEIQKLTRQAISDARPVVLIPTMGALHEGHLSLVDTAYSLELDNPFVIMSIFVNPLQFAAGEDLDSYPRTLDADAAKLATHNHQVHAIFAPSPAEMYPLGPRTTITPGAAALRFEGATRPTHFAGVLTVVNKLFQITQCQHAIFGEKDFQQLALIRQMVADFNLPVHVHGSPLMRDHDGVALSSRNAYLSDTERVEARRISAALRQAAMFHVKHDIIAAAINAMAGMDIDYIDVVAPDFSEPTAGNELYGDARIITAVKVGSTRLLDNMAVNVEKPNA</sequence>
<proteinExistence type="inferred from homology"/>
<name>PANC_CORDI</name>